<organism>
    <name type="scientific">Mus musculus</name>
    <name type="common">Mouse</name>
    <dbReference type="NCBI Taxonomy" id="10090"/>
    <lineage>
        <taxon>Eukaryota</taxon>
        <taxon>Metazoa</taxon>
        <taxon>Chordata</taxon>
        <taxon>Craniata</taxon>
        <taxon>Vertebrata</taxon>
        <taxon>Euteleostomi</taxon>
        <taxon>Mammalia</taxon>
        <taxon>Eutheria</taxon>
        <taxon>Euarchontoglires</taxon>
        <taxon>Glires</taxon>
        <taxon>Rodentia</taxon>
        <taxon>Myomorpha</taxon>
        <taxon>Muroidea</taxon>
        <taxon>Muridae</taxon>
        <taxon>Murinae</taxon>
        <taxon>Mus</taxon>
        <taxon>Mus</taxon>
    </lineage>
</organism>
<comment type="function">
    <text evidence="4 5">May modulate immune response and may play a role in inflammation. Down-modulates STAT3 signaling throught direct interaction with IL6ST, resulting in the inhibition of phosphorylation of STAT3 at 'Tyr-705' (PubMed:26927669). May negatively regulates AKT signaling by modulating the activity of mTORC2 complex through RICTOR interaction (PubMed:25418727).</text>
</comment>
<comment type="subunit">
    <text evidence="1 4">Interacts with IL6ST; this interaction prevents IL6ST protein homodimerization and bridges ARMH4 with IL6R and STAT3 and therefore inhibits phosphorylation of STAT3 at 'Tyr-705' (By similarity). Interacts (via cytoplasmic tail) with RICTOR; this interaction bridges ARMH4 to the mTORC2 complex and inhibits the mTORC2 kinase activity (PubMed:25418727).</text>
</comment>
<comment type="subcellular location">
    <subcellularLocation>
        <location evidence="1">Membrane</location>
        <topology evidence="1">Single-pass type I membrane protein</topology>
    </subcellularLocation>
</comment>
<comment type="tissue specificity">
    <text evidence="4">Expressed in bone-marroew cells.</text>
</comment>
<comment type="induction">
    <text evidence="4">Transcriptionally regulated by FOXO3.</text>
</comment>
<name>ARMD4_MOUSE</name>
<gene>
    <name evidence="1" type="primary">Armh4</name>
    <name evidence="6" type="synonym">Ut2</name>
</gene>
<sequence>MLQDSITGIVNSFNLFFPSTMSRPTLMPTCVAFCSILFLTLATGCQAFPKVERRETAQEYAEKEQSQKMNTDDQENISFAPKYMLQQMSSEAPMVLSEGPSEIPLIKVFSVNKESHLPGAGLLHPTSPGVYSSSEPVVSASEQEPGPSLLERMSSEHSLSKVMLTVAVSSPASLNPDQEGPYNSLSTQPIVAAVTDVTHGSLDYLDNQLFAAKSQEAVSLGNSPSSSINTKEPEIIKADAAMGTTVVPGVDSTGDMEPDRERPSEMAADDGQSTTTKYLVTIPNNFLTTEPTAGSILGDAKVTVSVSTAGPVSSIFNEEWDDTKFESISRGRPPEPGDNAETQMRTKPPHGTYESFEGTEESPSSTAVLKVAPGHLGGEPALGTALVTALGDERSPVLTHQISFTPMSLAEDPEVSTMKLFPSAGGFRASTQGDRTQLSSETAFSTSQYESVPQQEAGNVLKDITQERKMATQAMNTTSPVVTQEHMATIEVPRGSGEPEEGMPSLSPVPAEVADAELSRRGESLATPASTTVVPLSLKLTSSMEDLMDTITGPSEEFIPVLGSPMAPPAMTVEAPTISSALPSEGRTSPSISRPNTAASYGLEQLESEEVEDDEDEEDEEDEEEEEEDEEDEEDEEDKETDSLYKDFDGDTEPPGFTLPGITSQEPDIRSGSMDLLEVATYQVPETIEWEQQNQGLVRSWMEKLKDKAGYMSGMLVPVGVGIAGALFILGALYSIKVMNRRRRNGFKRHKRKQREFNSMQDRVMLLADSSEDEF</sequence>
<evidence type="ECO:0000250" key="1">
    <source>
        <dbReference type="UniProtKB" id="Q86TY3"/>
    </source>
</evidence>
<evidence type="ECO:0000255" key="2"/>
<evidence type="ECO:0000256" key="3">
    <source>
        <dbReference type="SAM" id="MobiDB-lite"/>
    </source>
</evidence>
<evidence type="ECO:0000269" key="4">
    <source>
    </source>
</evidence>
<evidence type="ECO:0000269" key="5">
    <source>
    </source>
</evidence>
<evidence type="ECO:0000303" key="6">
    <source>
    </source>
</evidence>
<evidence type="ECO:0000305" key="7"/>
<evidence type="ECO:0000305" key="8">
    <source>
    </source>
</evidence>
<accession>Q8BT18</accession>
<accession>Q8BFQ7</accession>
<accession>Q8R1Q5</accession>
<accession>Q9D6C5</accession>
<protein>
    <recommendedName>
        <fullName evidence="1">Armadillo-like helical domain-containing protein 4</fullName>
    </recommendedName>
    <alternativeName>
        <fullName evidence="8">Upstream of mTORC2 protein</fullName>
    </alternativeName>
</protein>
<dbReference type="EMBL" id="AK014402">
    <property type="protein sequence ID" value="BAB29326.1"/>
    <property type="molecule type" value="mRNA"/>
</dbReference>
<dbReference type="EMBL" id="AK028180">
    <property type="protein sequence ID" value="BAC25793.1"/>
    <property type="molecule type" value="mRNA"/>
</dbReference>
<dbReference type="EMBL" id="AK032093">
    <property type="protein sequence ID" value="BAC27694.1"/>
    <property type="molecule type" value="mRNA"/>
</dbReference>
<dbReference type="EMBL" id="AK049427">
    <property type="protein sequence ID" value="BAC33748.1"/>
    <property type="molecule type" value="mRNA"/>
</dbReference>
<dbReference type="EMBL" id="BC023359">
    <property type="protein sequence ID" value="AAH23359.1"/>
    <property type="molecule type" value="mRNA"/>
</dbReference>
<dbReference type="CCDS" id="CCDS36903.1"/>
<dbReference type="RefSeq" id="NP_080418.2">
    <property type="nucleotide sequence ID" value="NM_026142.5"/>
</dbReference>
<dbReference type="FunCoup" id="Q8BT18">
    <property type="interactions" value="5"/>
</dbReference>
<dbReference type="STRING" id="10090.ENSMUSP00000036220"/>
<dbReference type="GlyCosmos" id="Q8BT18">
    <property type="glycosylation" value="2 sites, No reported glycans"/>
</dbReference>
<dbReference type="GlyGen" id="Q8BT18">
    <property type="glycosylation" value="2 sites, 1 N-linked glycan (1 site)"/>
</dbReference>
<dbReference type="iPTMnet" id="Q8BT18"/>
<dbReference type="PhosphoSitePlus" id="Q8BT18"/>
<dbReference type="CPTAC" id="non-CPTAC-3453"/>
<dbReference type="PaxDb" id="10090-ENSMUSP00000036220"/>
<dbReference type="Antibodypedia" id="77">
    <property type="antibodies" value="37 antibodies from 15 providers"/>
</dbReference>
<dbReference type="DNASU" id="67419"/>
<dbReference type="Ensembl" id="ENSMUST00000036972.14">
    <property type="protein sequence ID" value="ENSMUSP00000036220.7"/>
    <property type="gene ID" value="ENSMUSG00000036242.16"/>
</dbReference>
<dbReference type="GeneID" id="67419"/>
<dbReference type="KEGG" id="mmu:67419"/>
<dbReference type="UCSC" id="uc007tkk.2">
    <property type="organism name" value="mouse"/>
</dbReference>
<dbReference type="AGR" id="MGI:1914669"/>
<dbReference type="CTD" id="145407"/>
<dbReference type="MGI" id="MGI:1914669">
    <property type="gene designation" value="Armh4"/>
</dbReference>
<dbReference type="VEuPathDB" id="HostDB:ENSMUSG00000036242"/>
<dbReference type="eggNOG" id="ENOG502QWJQ">
    <property type="taxonomic scope" value="Eukaryota"/>
</dbReference>
<dbReference type="GeneTree" id="ENSGT00390000012816"/>
<dbReference type="HOGENOM" id="CLU_021688_0_0_1"/>
<dbReference type="InParanoid" id="Q8BT18"/>
<dbReference type="OMA" id="DVNTKEM"/>
<dbReference type="OrthoDB" id="9904542at2759"/>
<dbReference type="PhylomeDB" id="Q8BT18"/>
<dbReference type="TreeFam" id="TF336099"/>
<dbReference type="BioGRID-ORCS" id="67419">
    <property type="hits" value="1 hit in 78 CRISPR screens"/>
</dbReference>
<dbReference type="ChiTaRS" id="Armh4">
    <property type="organism name" value="mouse"/>
</dbReference>
<dbReference type="PRO" id="PR:Q8BT18"/>
<dbReference type="Proteomes" id="UP000000589">
    <property type="component" value="Chromosome 14"/>
</dbReference>
<dbReference type="RNAct" id="Q8BT18">
    <property type="molecule type" value="protein"/>
</dbReference>
<dbReference type="Bgee" id="ENSMUSG00000036242">
    <property type="expression patterns" value="Expressed in humerus cartilage element and 244 other cell types or tissues"/>
</dbReference>
<dbReference type="ExpressionAtlas" id="Q8BT18">
    <property type="expression patterns" value="baseline and differential"/>
</dbReference>
<dbReference type="GO" id="GO:0016020">
    <property type="term" value="C:membrane"/>
    <property type="evidence" value="ECO:0000250"/>
    <property type="project" value="UniProtKB"/>
</dbReference>
<dbReference type="GO" id="GO:1904841">
    <property type="term" value="F:TORC2 complex binding"/>
    <property type="evidence" value="ECO:0000314"/>
    <property type="project" value="UniProtKB"/>
</dbReference>
<dbReference type="GO" id="GO:0050727">
    <property type="term" value="P:regulation of inflammatory response"/>
    <property type="evidence" value="ECO:0000250"/>
    <property type="project" value="UniProtKB"/>
</dbReference>
<dbReference type="GO" id="GO:1903939">
    <property type="term" value="P:regulation of TORC2 signaling"/>
    <property type="evidence" value="ECO:0000314"/>
    <property type="project" value="UniProtKB"/>
</dbReference>
<dbReference type="InterPro" id="IPR031524">
    <property type="entry name" value="ARMH4"/>
</dbReference>
<dbReference type="PANTHER" id="PTHR21585:SF0">
    <property type="entry name" value="ARMADILLO-LIKE HELICAL DOMAIN-CONTAINING PROTEIN 4"/>
    <property type="match status" value="1"/>
</dbReference>
<dbReference type="PANTHER" id="PTHR21585">
    <property type="entry name" value="FULL-LENGTH CDNA CLONE CS0DC025YL05 OF NEUROBLASTOMA"/>
    <property type="match status" value="1"/>
</dbReference>
<dbReference type="Pfam" id="PF15767">
    <property type="entry name" value="ARMH4"/>
    <property type="match status" value="1"/>
</dbReference>
<reference key="1">
    <citation type="journal article" date="2005" name="Science">
        <title>The transcriptional landscape of the mammalian genome.</title>
        <authorList>
            <person name="Carninci P."/>
            <person name="Kasukawa T."/>
            <person name="Katayama S."/>
            <person name="Gough J."/>
            <person name="Frith M.C."/>
            <person name="Maeda N."/>
            <person name="Oyama R."/>
            <person name="Ravasi T."/>
            <person name="Lenhard B."/>
            <person name="Wells C."/>
            <person name="Kodzius R."/>
            <person name="Shimokawa K."/>
            <person name="Bajic V.B."/>
            <person name="Brenner S.E."/>
            <person name="Batalov S."/>
            <person name="Forrest A.R."/>
            <person name="Zavolan M."/>
            <person name="Davis M.J."/>
            <person name="Wilming L.G."/>
            <person name="Aidinis V."/>
            <person name="Allen J.E."/>
            <person name="Ambesi-Impiombato A."/>
            <person name="Apweiler R."/>
            <person name="Aturaliya R.N."/>
            <person name="Bailey T.L."/>
            <person name="Bansal M."/>
            <person name="Baxter L."/>
            <person name="Beisel K.W."/>
            <person name="Bersano T."/>
            <person name="Bono H."/>
            <person name="Chalk A.M."/>
            <person name="Chiu K.P."/>
            <person name="Choudhary V."/>
            <person name="Christoffels A."/>
            <person name="Clutterbuck D.R."/>
            <person name="Crowe M.L."/>
            <person name="Dalla E."/>
            <person name="Dalrymple B.P."/>
            <person name="de Bono B."/>
            <person name="Della Gatta G."/>
            <person name="di Bernardo D."/>
            <person name="Down T."/>
            <person name="Engstrom P."/>
            <person name="Fagiolini M."/>
            <person name="Faulkner G."/>
            <person name="Fletcher C.F."/>
            <person name="Fukushima T."/>
            <person name="Furuno M."/>
            <person name="Futaki S."/>
            <person name="Gariboldi M."/>
            <person name="Georgii-Hemming P."/>
            <person name="Gingeras T.R."/>
            <person name="Gojobori T."/>
            <person name="Green R.E."/>
            <person name="Gustincich S."/>
            <person name="Harbers M."/>
            <person name="Hayashi Y."/>
            <person name="Hensch T.K."/>
            <person name="Hirokawa N."/>
            <person name="Hill D."/>
            <person name="Huminiecki L."/>
            <person name="Iacono M."/>
            <person name="Ikeo K."/>
            <person name="Iwama A."/>
            <person name="Ishikawa T."/>
            <person name="Jakt M."/>
            <person name="Kanapin A."/>
            <person name="Katoh M."/>
            <person name="Kawasawa Y."/>
            <person name="Kelso J."/>
            <person name="Kitamura H."/>
            <person name="Kitano H."/>
            <person name="Kollias G."/>
            <person name="Krishnan S.P."/>
            <person name="Kruger A."/>
            <person name="Kummerfeld S.K."/>
            <person name="Kurochkin I.V."/>
            <person name="Lareau L.F."/>
            <person name="Lazarevic D."/>
            <person name="Lipovich L."/>
            <person name="Liu J."/>
            <person name="Liuni S."/>
            <person name="McWilliam S."/>
            <person name="Madan Babu M."/>
            <person name="Madera M."/>
            <person name="Marchionni L."/>
            <person name="Matsuda H."/>
            <person name="Matsuzawa S."/>
            <person name="Miki H."/>
            <person name="Mignone F."/>
            <person name="Miyake S."/>
            <person name="Morris K."/>
            <person name="Mottagui-Tabar S."/>
            <person name="Mulder N."/>
            <person name="Nakano N."/>
            <person name="Nakauchi H."/>
            <person name="Ng P."/>
            <person name="Nilsson R."/>
            <person name="Nishiguchi S."/>
            <person name="Nishikawa S."/>
            <person name="Nori F."/>
            <person name="Ohara O."/>
            <person name="Okazaki Y."/>
            <person name="Orlando V."/>
            <person name="Pang K.C."/>
            <person name="Pavan W.J."/>
            <person name="Pavesi G."/>
            <person name="Pesole G."/>
            <person name="Petrovsky N."/>
            <person name="Piazza S."/>
            <person name="Reed J."/>
            <person name="Reid J.F."/>
            <person name="Ring B.Z."/>
            <person name="Ringwald M."/>
            <person name="Rost B."/>
            <person name="Ruan Y."/>
            <person name="Salzberg S.L."/>
            <person name="Sandelin A."/>
            <person name="Schneider C."/>
            <person name="Schoenbach C."/>
            <person name="Sekiguchi K."/>
            <person name="Semple C.A."/>
            <person name="Seno S."/>
            <person name="Sessa L."/>
            <person name="Sheng Y."/>
            <person name="Shibata Y."/>
            <person name="Shimada H."/>
            <person name="Shimada K."/>
            <person name="Silva D."/>
            <person name="Sinclair B."/>
            <person name="Sperling S."/>
            <person name="Stupka E."/>
            <person name="Sugiura K."/>
            <person name="Sultana R."/>
            <person name="Takenaka Y."/>
            <person name="Taki K."/>
            <person name="Tammoja K."/>
            <person name="Tan S.L."/>
            <person name="Tang S."/>
            <person name="Taylor M.S."/>
            <person name="Tegner J."/>
            <person name="Teichmann S.A."/>
            <person name="Ueda H.R."/>
            <person name="van Nimwegen E."/>
            <person name="Verardo R."/>
            <person name="Wei C.L."/>
            <person name="Yagi K."/>
            <person name="Yamanishi H."/>
            <person name="Zabarovsky E."/>
            <person name="Zhu S."/>
            <person name="Zimmer A."/>
            <person name="Hide W."/>
            <person name="Bult C."/>
            <person name="Grimmond S.M."/>
            <person name="Teasdale R.D."/>
            <person name="Liu E.T."/>
            <person name="Brusic V."/>
            <person name="Quackenbush J."/>
            <person name="Wahlestedt C."/>
            <person name="Mattick J.S."/>
            <person name="Hume D.A."/>
            <person name="Kai C."/>
            <person name="Sasaki D."/>
            <person name="Tomaru Y."/>
            <person name="Fukuda S."/>
            <person name="Kanamori-Katayama M."/>
            <person name="Suzuki M."/>
            <person name="Aoki J."/>
            <person name="Arakawa T."/>
            <person name="Iida J."/>
            <person name="Imamura K."/>
            <person name="Itoh M."/>
            <person name="Kato T."/>
            <person name="Kawaji H."/>
            <person name="Kawagashira N."/>
            <person name="Kawashima T."/>
            <person name="Kojima M."/>
            <person name="Kondo S."/>
            <person name="Konno H."/>
            <person name="Nakano K."/>
            <person name="Ninomiya N."/>
            <person name="Nishio T."/>
            <person name="Okada M."/>
            <person name="Plessy C."/>
            <person name="Shibata K."/>
            <person name="Shiraki T."/>
            <person name="Suzuki S."/>
            <person name="Tagami M."/>
            <person name="Waki K."/>
            <person name="Watahiki A."/>
            <person name="Okamura-Oho Y."/>
            <person name="Suzuki H."/>
            <person name="Kawai J."/>
            <person name="Hayashizaki Y."/>
        </authorList>
    </citation>
    <scope>NUCLEOTIDE SEQUENCE [LARGE SCALE MRNA]</scope>
    <source>
        <strain>C57BL/6J</strain>
        <tissue>Brain</tissue>
        <tissue>Embryo</tissue>
        <tissue>Medulla oblongata</tissue>
    </source>
</reference>
<reference key="2">
    <citation type="journal article" date="2004" name="Genome Res.">
        <title>The status, quality, and expansion of the NIH full-length cDNA project: the Mammalian Gene Collection (MGC).</title>
        <authorList>
            <consortium name="The MGC Project Team"/>
        </authorList>
    </citation>
    <scope>NUCLEOTIDE SEQUENCE [LARGE SCALE MRNA]</scope>
    <source>
        <strain>FVB/N</strain>
        <tissue>Kidney</tissue>
    </source>
</reference>
<reference key="3">
    <citation type="journal article" date="2014" name="Stem Cell Reports">
        <title>Transmembrane Inhibitor of RICTOR/mTORC2 in Hematopoietic Progenitors.</title>
        <authorList>
            <person name="Lee D."/>
            <person name="Sykes S.M."/>
            <person name="Kalaitzidis D."/>
            <person name="Lane A.A."/>
            <person name="Kfoury Y."/>
            <person name="Raaijmakers M.H."/>
            <person name="Wang Y.H."/>
            <person name="Armstrong S.A."/>
            <person name="Scadden D.T."/>
        </authorList>
    </citation>
    <scope>FUNCTION</scope>
    <scope>TISSUE SPECIFICITY</scope>
    <scope>INTERACTION WITH RICTOR</scope>
    <scope>INDUCTION</scope>
</reference>
<reference key="4">
    <citation type="journal article" date="2016" name="J. Clin. Invest.">
        <title>Endogenous transmembrane protein UT2 inhibits pSTAT3 and suppresses hematological malignancy.</title>
        <authorList>
            <person name="Lee D."/>
            <person name="Wang Y.H."/>
            <person name="Kalaitzidis D."/>
            <person name="Ramachandran J."/>
            <person name="Eda H."/>
            <person name="Sykes D.B."/>
            <person name="Raje N."/>
            <person name="Scadden D.T."/>
        </authorList>
    </citation>
    <scope>FUNCTION</scope>
</reference>
<feature type="signal peptide" evidence="2">
    <location>
        <begin position="1"/>
        <end position="47"/>
    </location>
</feature>
<feature type="chain" id="PRO_0000252153" description="Armadillo-like helical domain-containing protein 4">
    <location>
        <begin position="48"/>
        <end position="775"/>
    </location>
</feature>
<feature type="topological domain" description="Extracellular" evidence="2">
    <location>
        <begin position="48"/>
        <end position="715"/>
    </location>
</feature>
<feature type="transmembrane region" description="Helical" evidence="2">
    <location>
        <begin position="716"/>
        <end position="736"/>
    </location>
</feature>
<feature type="topological domain" description="Cytoplasmic" evidence="2">
    <location>
        <begin position="737"/>
        <end position="775"/>
    </location>
</feature>
<feature type="region of interest" description="Disordered" evidence="3">
    <location>
        <begin position="120"/>
        <end position="148"/>
    </location>
</feature>
<feature type="region of interest" description="Disordered" evidence="3">
    <location>
        <begin position="247"/>
        <end position="273"/>
    </location>
</feature>
<feature type="region of interest" description="Disordered" evidence="3">
    <location>
        <begin position="324"/>
        <end position="366"/>
    </location>
</feature>
<feature type="region of interest" description="Disordered" evidence="3">
    <location>
        <begin position="559"/>
        <end position="669"/>
    </location>
</feature>
<feature type="compositionally biased region" description="Polar residues" evidence="3">
    <location>
        <begin position="129"/>
        <end position="142"/>
    </location>
</feature>
<feature type="compositionally biased region" description="Basic and acidic residues" evidence="3">
    <location>
        <begin position="324"/>
        <end position="335"/>
    </location>
</feature>
<feature type="compositionally biased region" description="Polar residues" evidence="3">
    <location>
        <begin position="577"/>
        <end position="599"/>
    </location>
</feature>
<feature type="compositionally biased region" description="Acidic residues" evidence="3">
    <location>
        <begin position="606"/>
        <end position="640"/>
    </location>
</feature>
<feature type="modified residue" description="Phosphoserine" evidence="1">
    <location>
        <position position="770"/>
    </location>
</feature>
<feature type="modified residue" description="Phosphoserine" evidence="1">
    <location>
        <position position="771"/>
    </location>
</feature>
<feature type="glycosylation site" description="N-linked (GlcNAc...) asparagine" evidence="2">
    <location>
        <position position="76"/>
    </location>
</feature>
<feature type="glycosylation site" description="N-linked (GlcNAc...) asparagine" evidence="2">
    <location>
        <position position="476"/>
    </location>
</feature>
<feature type="sequence conflict" description="In Ref. 1; BAB29326." evidence="7" ref="1">
    <original>E</original>
    <variation>G</variation>
    <location>
        <position position="102"/>
    </location>
</feature>
<feature type="sequence conflict" description="In Ref. 2; AAH23359." evidence="7" ref="2">
    <original>I</original>
    <variation>H</variation>
    <location>
        <position position="106"/>
    </location>
</feature>
<feature type="sequence conflict" description="In Ref. 2; AAH23359." evidence="7" ref="2">
    <original>V</original>
    <variation>A</variation>
    <location>
        <position position="137"/>
    </location>
</feature>
<feature type="sequence conflict" description="In Ref. 2; AAH23359." evidence="7" ref="2">
    <original>A</original>
    <variation>P</variation>
    <location>
        <position position="140"/>
    </location>
</feature>
<feature type="sequence conflict" description="In Ref. 2; AAH23359." evidence="7" ref="2">
    <original>V</original>
    <variation>A</variation>
    <location>
        <position position="162"/>
    </location>
</feature>
<feature type="sequence conflict" description="In Ref. 1; BAB29326." evidence="7" ref="1">
    <original>N</original>
    <variation>D</variation>
    <location>
        <position position="183"/>
    </location>
</feature>
<feature type="sequence conflict" description="In Ref. 2; AAH23359." evidence="7" ref="2">
    <original>DNQ</original>
    <variation>NNH</variation>
    <location>
        <begin position="206"/>
        <end position="208"/>
    </location>
</feature>
<feature type="sequence conflict" description="In Ref. 1; BAB29326." evidence="7" ref="1">
    <original>I</original>
    <variation>V</variation>
    <location>
        <position position="228"/>
    </location>
</feature>
<feature type="sequence conflict" description="In Ref. 2; AAH23359." evidence="7" ref="2">
    <original>V</original>
    <variation>F</variation>
    <location>
        <position position="247"/>
    </location>
</feature>
<feature type="sequence conflict" description="In Ref. 2; AAH23359." evidence="7" ref="2">
    <original>M</original>
    <variation>T</variation>
    <location>
        <position position="256"/>
    </location>
</feature>
<feature type="sequence conflict" description="In Ref. 2; AAH23359." evidence="7" ref="2">
    <original>M</original>
    <variation>N</variation>
    <location>
        <position position="266"/>
    </location>
</feature>
<feature type="sequence conflict" description="In Ref. 2; AAH23359." evidence="7" ref="2">
    <original>F</original>
    <variation>V</variation>
    <location>
        <position position="286"/>
    </location>
</feature>
<feature type="sequence conflict" description="In Ref. 2; AAH23359." evidence="7" ref="2">
    <original>G</original>
    <variation>A</variation>
    <location>
        <position position="351"/>
    </location>
</feature>
<feature type="sequence conflict" description="In Ref. 2; AAH23359." evidence="7" ref="2">
    <original>R</original>
    <variation>I</variation>
    <location>
        <position position="468"/>
    </location>
</feature>
<feature type="sequence conflict" description="In Ref. 2; AAH23359." evidence="7" ref="2">
    <original>S</original>
    <variation>F</variation>
    <location>
        <position position="479"/>
    </location>
</feature>
<feature type="sequence conflict" description="In Ref. 2; AAH23359." evidence="7" ref="2">
    <original>G</original>
    <variation>W</variation>
    <location>
        <position position="522"/>
    </location>
</feature>
<feature type="sequence conflict" description="In Ref. 2; AAH23359." evidence="7" ref="2">
    <original>M</original>
    <variation>V</variation>
    <location>
        <position position="544"/>
    </location>
</feature>
<feature type="sequence conflict" description="In Ref. 2; AAH23359." evidence="7" ref="2">
    <original>P</original>
    <variation>L</variation>
    <location>
        <position position="583"/>
    </location>
</feature>
<feature type="sequence conflict" description="In Ref. 1; BAC25793." evidence="7" ref="1">
    <original>S</original>
    <variation>C</variation>
    <location>
        <position position="591"/>
    </location>
</feature>
<feature type="sequence conflict" description="In Ref. 2; AAH23359." evidence="7" ref="2">
    <location>
        <position position="621"/>
    </location>
</feature>
<feature type="sequence conflict" description="In Ref. 2; AAH23359." evidence="7" ref="2">
    <original>S</original>
    <variation>P</variation>
    <location>
        <position position="671"/>
    </location>
</feature>
<feature type="sequence conflict" description="In Ref. 1; BAC25793." evidence="7" ref="1">
    <location>
        <position position="754"/>
    </location>
</feature>
<feature type="sequence conflict" description="In Ref. 2; AAH23359." evidence="7" ref="2">
    <original>S</original>
    <variation>F</variation>
    <location>
        <position position="771"/>
    </location>
</feature>
<proteinExistence type="evidence at protein level"/>
<keyword id="KW-0325">Glycoprotein</keyword>
<keyword id="KW-0472">Membrane</keyword>
<keyword id="KW-0597">Phosphoprotein</keyword>
<keyword id="KW-1185">Reference proteome</keyword>
<keyword id="KW-0732">Signal</keyword>
<keyword id="KW-0812">Transmembrane</keyword>
<keyword id="KW-1133">Transmembrane helix</keyword>